<name>RECX_STAAC</name>
<dbReference type="EMBL" id="CP000046">
    <property type="protein sequence ID" value="AAW38372.1"/>
    <property type="molecule type" value="Genomic_DNA"/>
</dbReference>
<dbReference type="RefSeq" id="WP_001124419.1">
    <property type="nucleotide sequence ID" value="NZ_JBGOFO010000006.1"/>
</dbReference>
<dbReference type="SMR" id="Q5HEQ1"/>
<dbReference type="KEGG" id="sac:SACOL1931"/>
<dbReference type="HOGENOM" id="CLU_066607_4_0_9"/>
<dbReference type="Proteomes" id="UP000000530">
    <property type="component" value="Chromosome"/>
</dbReference>
<dbReference type="GO" id="GO:0005737">
    <property type="term" value="C:cytoplasm"/>
    <property type="evidence" value="ECO:0007669"/>
    <property type="project" value="UniProtKB-SubCell"/>
</dbReference>
<dbReference type="GO" id="GO:0006282">
    <property type="term" value="P:regulation of DNA repair"/>
    <property type="evidence" value="ECO:0007669"/>
    <property type="project" value="UniProtKB-UniRule"/>
</dbReference>
<dbReference type="Gene3D" id="1.10.10.10">
    <property type="entry name" value="Winged helix-like DNA-binding domain superfamily/Winged helix DNA-binding domain"/>
    <property type="match status" value="4"/>
</dbReference>
<dbReference type="HAMAP" id="MF_01114">
    <property type="entry name" value="RecX"/>
    <property type="match status" value="1"/>
</dbReference>
<dbReference type="InterPro" id="IPR053926">
    <property type="entry name" value="RecX_HTH_1st"/>
</dbReference>
<dbReference type="InterPro" id="IPR053925">
    <property type="entry name" value="RecX_HTH_3rd"/>
</dbReference>
<dbReference type="InterPro" id="IPR003783">
    <property type="entry name" value="Regulatory_RecX"/>
</dbReference>
<dbReference type="InterPro" id="IPR036388">
    <property type="entry name" value="WH-like_DNA-bd_sf"/>
</dbReference>
<dbReference type="NCBIfam" id="NF010733">
    <property type="entry name" value="PRK14135.1"/>
    <property type="match status" value="1"/>
</dbReference>
<dbReference type="PANTHER" id="PTHR33602">
    <property type="entry name" value="REGULATORY PROTEIN RECX FAMILY PROTEIN"/>
    <property type="match status" value="1"/>
</dbReference>
<dbReference type="PANTHER" id="PTHR33602:SF1">
    <property type="entry name" value="REGULATORY PROTEIN RECX FAMILY PROTEIN"/>
    <property type="match status" value="1"/>
</dbReference>
<dbReference type="Pfam" id="PF21982">
    <property type="entry name" value="RecX_HTH1"/>
    <property type="match status" value="1"/>
</dbReference>
<dbReference type="Pfam" id="PF21981">
    <property type="entry name" value="RecX_HTH3"/>
    <property type="match status" value="1"/>
</dbReference>
<sequence>MPKITKIEVQKKNKERFNLFLDEQFEMGIDIDTLVKFNLKKGQQLEAADMAEIQKYDHYRIGLNKAIQYLSYKKRTEKEVIQYLQKEEISEQAISEVIEYCYREKLIDHQDYAESLKNTMIRTTDKGPKIYQQKLYQLGIEPNIIEIFTELYREQQELDDIIQIAEKISKTKKGPQNKVKEKVMQSLIQKGFEMETIHAVLNEMDFTQDEAVLDDLLQRDLEKIYNKNRKKYTQQKLISKTIEGLMRKGYKYDKIKAKLEESGIADGTEEIE</sequence>
<feature type="chain" id="PRO_0000162469" description="Regulatory protein RecX">
    <location>
        <begin position="1"/>
        <end position="272"/>
    </location>
</feature>
<protein>
    <recommendedName>
        <fullName evidence="1">Regulatory protein RecX</fullName>
    </recommendedName>
</protein>
<accession>Q5HEQ1</accession>
<keyword id="KW-0963">Cytoplasm</keyword>
<reference key="1">
    <citation type="journal article" date="2005" name="J. Bacteriol.">
        <title>Insights on evolution of virulence and resistance from the complete genome analysis of an early methicillin-resistant Staphylococcus aureus strain and a biofilm-producing methicillin-resistant Staphylococcus epidermidis strain.</title>
        <authorList>
            <person name="Gill S.R."/>
            <person name="Fouts D.E."/>
            <person name="Archer G.L."/>
            <person name="Mongodin E.F."/>
            <person name="DeBoy R.T."/>
            <person name="Ravel J."/>
            <person name="Paulsen I.T."/>
            <person name="Kolonay J.F."/>
            <person name="Brinkac L.M."/>
            <person name="Beanan M.J."/>
            <person name="Dodson R.J."/>
            <person name="Daugherty S.C."/>
            <person name="Madupu R."/>
            <person name="Angiuoli S.V."/>
            <person name="Durkin A.S."/>
            <person name="Haft D.H."/>
            <person name="Vamathevan J.J."/>
            <person name="Khouri H."/>
            <person name="Utterback T.R."/>
            <person name="Lee C."/>
            <person name="Dimitrov G."/>
            <person name="Jiang L."/>
            <person name="Qin H."/>
            <person name="Weidman J."/>
            <person name="Tran K."/>
            <person name="Kang K.H."/>
            <person name="Hance I.R."/>
            <person name="Nelson K.E."/>
            <person name="Fraser C.M."/>
        </authorList>
    </citation>
    <scope>NUCLEOTIDE SEQUENCE [LARGE SCALE GENOMIC DNA]</scope>
    <source>
        <strain>COL</strain>
    </source>
</reference>
<proteinExistence type="inferred from homology"/>
<gene>
    <name evidence="1" type="primary">recX</name>
    <name type="ordered locus">SACOL1931</name>
</gene>
<organism>
    <name type="scientific">Staphylococcus aureus (strain COL)</name>
    <dbReference type="NCBI Taxonomy" id="93062"/>
    <lineage>
        <taxon>Bacteria</taxon>
        <taxon>Bacillati</taxon>
        <taxon>Bacillota</taxon>
        <taxon>Bacilli</taxon>
        <taxon>Bacillales</taxon>
        <taxon>Staphylococcaceae</taxon>
        <taxon>Staphylococcus</taxon>
    </lineage>
</organism>
<evidence type="ECO:0000255" key="1">
    <source>
        <dbReference type="HAMAP-Rule" id="MF_01114"/>
    </source>
</evidence>
<comment type="function">
    <text evidence="1">Modulates RecA activity.</text>
</comment>
<comment type="subcellular location">
    <subcellularLocation>
        <location evidence="1">Cytoplasm</location>
    </subcellularLocation>
</comment>
<comment type="similarity">
    <text evidence="1">Belongs to the RecX family.</text>
</comment>